<keyword id="KW-0963">Cytoplasm</keyword>
<keyword id="KW-0274">FAD</keyword>
<keyword id="KW-0285">Flavoprotein</keyword>
<keyword id="KW-0520">NAD</keyword>
<keyword id="KW-1185">Reference proteome</keyword>
<keyword id="KW-0819">tRNA processing</keyword>
<organism>
    <name type="scientific">Laribacter hongkongensis (strain HLHK9)</name>
    <dbReference type="NCBI Taxonomy" id="557598"/>
    <lineage>
        <taxon>Bacteria</taxon>
        <taxon>Pseudomonadati</taxon>
        <taxon>Pseudomonadota</taxon>
        <taxon>Betaproteobacteria</taxon>
        <taxon>Neisseriales</taxon>
        <taxon>Aquaspirillaceae</taxon>
        <taxon>Laribacter</taxon>
    </lineage>
</organism>
<comment type="function">
    <text evidence="1">NAD-binding protein involved in the addition of a carboxymethylaminomethyl (cmnm) group at the wobble position (U34) of certain tRNAs, forming tRNA-cmnm(5)s(2)U34.</text>
</comment>
<comment type="cofactor">
    <cofactor evidence="1">
        <name>FAD</name>
        <dbReference type="ChEBI" id="CHEBI:57692"/>
    </cofactor>
</comment>
<comment type="subunit">
    <text evidence="1">Homodimer. Heterotetramer of two MnmE and two MnmG subunits.</text>
</comment>
<comment type="subcellular location">
    <subcellularLocation>
        <location evidence="1">Cytoplasm</location>
    </subcellularLocation>
</comment>
<comment type="similarity">
    <text evidence="1">Belongs to the MnmG family.</text>
</comment>
<accession>C1D5H3</accession>
<reference key="1">
    <citation type="journal article" date="2009" name="PLoS Genet.">
        <title>The complete genome and proteome of Laribacter hongkongensis reveal potential mechanisms for adaptations to different temperatures and habitats.</title>
        <authorList>
            <person name="Woo P.C.Y."/>
            <person name="Lau S.K.P."/>
            <person name="Tse H."/>
            <person name="Teng J.L.L."/>
            <person name="Curreem S.O."/>
            <person name="Tsang A.K.L."/>
            <person name="Fan R.Y.Y."/>
            <person name="Wong G.K.M."/>
            <person name="Huang Y."/>
            <person name="Loman N.J."/>
            <person name="Snyder L.A.S."/>
            <person name="Cai J.J."/>
            <person name="Huang J.-D."/>
            <person name="Mak W."/>
            <person name="Pallen M.J."/>
            <person name="Lok S."/>
            <person name="Yuen K.-Y."/>
        </authorList>
    </citation>
    <scope>NUCLEOTIDE SEQUENCE [LARGE SCALE GENOMIC DNA]</scope>
    <source>
        <strain>HLHK9</strain>
    </source>
</reference>
<evidence type="ECO:0000255" key="1">
    <source>
        <dbReference type="HAMAP-Rule" id="MF_00129"/>
    </source>
</evidence>
<proteinExistence type="inferred from homology"/>
<name>MNMG_LARHH</name>
<protein>
    <recommendedName>
        <fullName evidence="1">tRNA uridine 5-carboxymethylaminomethyl modification enzyme MnmG</fullName>
    </recommendedName>
    <alternativeName>
        <fullName evidence="1">Glucose-inhibited division protein A</fullName>
    </alternativeName>
</protein>
<dbReference type="EMBL" id="CP001154">
    <property type="protein sequence ID" value="ACO75990.1"/>
    <property type="molecule type" value="Genomic_DNA"/>
</dbReference>
<dbReference type="RefSeq" id="WP_012698453.1">
    <property type="nucleotide sequence ID" value="NC_012559.1"/>
</dbReference>
<dbReference type="SMR" id="C1D5H3"/>
<dbReference type="STRING" id="557598.LHK_03012"/>
<dbReference type="GeneID" id="75108232"/>
<dbReference type="KEGG" id="lhk:LHK_03012"/>
<dbReference type="eggNOG" id="COG0445">
    <property type="taxonomic scope" value="Bacteria"/>
</dbReference>
<dbReference type="HOGENOM" id="CLU_007831_2_2_4"/>
<dbReference type="Proteomes" id="UP000002010">
    <property type="component" value="Chromosome"/>
</dbReference>
<dbReference type="GO" id="GO:0005829">
    <property type="term" value="C:cytosol"/>
    <property type="evidence" value="ECO:0007669"/>
    <property type="project" value="TreeGrafter"/>
</dbReference>
<dbReference type="GO" id="GO:0050660">
    <property type="term" value="F:flavin adenine dinucleotide binding"/>
    <property type="evidence" value="ECO:0007669"/>
    <property type="project" value="UniProtKB-UniRule"/>
</dbReference>
<dbReference type="GO" id="GO:0030488">
    <property type="term" value="P:tRNA methylation"/>
    <property type="evidence" value="ECO:0007669"/>
    <property type="project" value="TreeGrafter"/>
</dbReference>
<dbReference type="GO" id="GO:0002098">
    <property type="term" value="P:tRNA wobble uridine modification"/>
    <property type="evidence" value="ECO:0007669"/>
    <property type="project" value="InterPro"/>
</dbReference>
<dbReference type="FunFam" id="1.10.10.1800:FF:000001">
    <property type="entry name" value="tRNA uridine 5-carboxymethylaminomethyl modification enzyme MnmG"/>
    <property type="match status" value="1"/>
</dbReference>
<dbReference type="FunFam" id="1.10.150.570:FF:000001">
    <property type="entry name" value="tRNA uridine 5-carboxymethylaminomethyl modification enzyme MnmG"/>
    <property type="match status" value="1"/>
</dbReference>
<dbReference type="FunFam" id="3.50.50.60:FF:000002">
    <property type="entry name" value="tRNA uridine 5-carboxymethylaminomethyl modification enzyme MnmG"/>
    <property type="match status" value="1"/>
</dbReference>
<dbReference type="FunFam" id="3.50.50.60:FF:000010">
    <property type="entry name" value="tRNA uridine 5-carboxymethylaminomethyl modification enzyme MnmG"/>
    <property type="match status" value="1"/>
</dbReference>
<dbReference type="Gene3D" id="3.50.50.60">
    <property type="entry name" value="FAD/NAD(P)-binding domain"/>
    <property type="match status" value="2"/>
</dbReference>
<dbReference type="Gene3D" id="1.10.150.570">
    <property type="entry name" value="GidA associated domain, C-terminal subdomain"/>
    <property type="match status" value="1"/>
</dbReference>
<dbReference type="Gene3D" id="1.10.10.1800">
    <property type="entry name" value="tRNA uridine 5-carboxymethylaminomethyl modification enzyme MnmG/GidA"/>
    <property type="match status" value="1"/>
</dbReference>
<dbReference type="HAMAP" id="MF_00129">
    <property type="entry name" value="MnmG_GidA"/>
    <property type="match status" value="1"/>
</dbReference>
<dbReference type="InterPro" id="IPR036188">
    <property type="entry name" value="FAD/NAD-bd_sf"/>
</dbReference>
<dbReference type="InterPro" id="IPR049312">
    <property type="entry name" value="GIDA_C_N"/>
</dbReference>
<dbReference type="InterPro" id="IPR004416">
    <property type="entry name" value="MnmG"/>
</dbReference>
<dbReference type="InterPro" id="IPR002218">
    <property type="entry name" value="MnmG-rel"/>
</dbReference>
<dbReference type="InterPro" id="IPR020595">
    <property type="entry name" value="MnmG-rel_CS"/>
</dbReference>
<dbReference type="InterPro" id="IPR026904">
    <property type="entry name" value="MnmG_C"/>
</dbReference>
<dbReference type="InterPro" id="IPR047001">
    <property type="entry name" value="MnmG_C_subdom"/>
</dbReference>
<dbReference type="InterPro" id="IPR044920">
    <property type="entry name" value="MnmG_C_subdom_sf"/>
</dbReference>
<dbReference type="InterPro" id="IPR040131">
    <property type="entry name" value="MnmG_N"/>
</dbReference>
<dbReference type="NCBIfam" id="TIGR00136">
    <property type="entry name" value="mnmG_gidA"/>
    <property type="match status" value="1"/>
</dbReference>
<dbReference type="PANTHER" id="PTHR11806">
    <property type="entry name" value="GLUCOSE INHIBITED DIVISION PROTEIN A"/>
    <property type="match status" value="1"/>
</dbReference>
<dbReference type="PANTHER" id="PTHR11806:SF0">
    <property type="entry name" value="PROTEIN MTO1 HOMOLOG, MITOCHONDRIAL"/>
    <property type="match status" value="1"/>
</dbReference>
<dbReference type="Pfam" id="PF01134">
    <property type="entry name" value="GIDA"/>
    <property type="match status" value="1"/>
</dbReference>
<dbReference type="Pfam" id="PF21680">
    <property type="entry name" value="GIDA_C_1st"/>
    <property type="match status" value="1"/>
</dbReference>
<dbReference type="Pfam" id="PF13932">
    <property type="entry name" value="SAM_GIDA_C"/>
    <property type="match status" value="1"/>
</dbReference>
<dbReference type="SMART" id="SM01228">
    <property type="entry name" value="GIDA_assoc_3"/>
    <property type="match status" value="1"/>
</dbReference>
<dbReference type="SUPFAM" id="SSF51905">
    <property type="entry name" value="FAD/NAD(P)-binding domain"/>
    <property type="match status" value="1"/>
</dbReference>
<dbReference type="PROSITE" id="PS01280">
    <property type="entry name" value="GIDA_1"/>
    <property type="match status" value="1"/>
</dbReference>
<dbReference type="PROSITE" id="PS01281">
    <property type="entry name" value="GIDA_2"/>
    <property type="match status" value="1"/>
</dbReference>
<feature type="chain" id="PRO_1000122749" description="tRNA uridine 5-carboxymethylaminomethyl modification enzyme MnmG">
    <location>
        <begin position="1"/>
        <end position="628"/>
    </location>
</feature>
<feature type="binding site" evidence="1">
    <location>
        <begin position="13"/>
        <end position="18"/>
    </location>
    <ligand>
        <name>FAD</name>
        <dbReference type="ChEBI" id="CHEBI:57692"/>
    </ligand>
</feature>
<feature type="binding site" evidence="1">
    <location>
        <begin position="273"/>
        <end position="287"/>
    </location>
    <ligand>
        <name>NAD(+)</name>
        <dbReference type="ChEBI" id="CHEBI:57540"/>
    </ligand>
</feature>
<sequence>MIYPTEFDVIVVGGGHAGTEAALAAARMGRSTLLLTHNIETLGQMSCNPSIGGIGKGHLVKEVDALGGAMALATDMGGIQFRTLNASKGPAVRATRAQADRVRYKAAIRHMLENQPNLWLFQQAVDDLVMQGDRVAGAITQAGITFMSRTVVLTAGTFLSGKIHIGLENYTGGRAGDPAASTLGARLRDYALPVGRLKTGTPPRIDGRSIDFSVLEMQPGDDPAPVFSFRGSRDMHPQQLPCWVTHTNLRTHEIIRSGFDRSPMFTGKIEGVGPRYCPSIEDKINRFADRDSHQIFLEPEGLDTHEIYPNGVSTSLPFDIQLAALRSMKGLENAHILRPGYAIEYDYFDPRALRHTLESRRVAGLFFAGQINGTTGYEEAAAQGLLAGLNAARAARDEEGWYPGREEAYLGVLVDDLTTLGVNEPYRMFTSRAEFRLQLREDNADLRLTETGRRLGLVGDAQWDIFCRKRDAVAAERERLKSTWVNPRLVSEEDARRVLGQPVEREYSLEELLRRPGVDYATLATLPAFGGEALSGAVAEQVEIQVKYQGYIDRQHEEVARREATEHVRIPAAFDFSAVSGLSKEVQQKLALHRPETLGQASRISGVTPAAISLLHVYLKRAGAPKSE</sequence>
<gene>
    <name evidence="1" type="primary">mnmG</name>
    <name evidence="1" type="synonym">gidA</name>
    <name type="ordered locus">LHK_03012</name>
</gene>